<reference key="1">
    <citation type="journal article" date="2004" name="Science">
        <title>The 1.2-megabase genome sequence of Mimivirus.</title>
        <authorList>
            <person name="Raoult D."/>
            <person name="Audic S."/>
            <person name="Robert C."/>
            <person name="Abergel C."/>
            <person name="Renesto P."/>
            <person name="Ogata H."/>
            <person name="La Scola B."/>
            <person name="Susan M."/>
            <person name="Claverie J.-M."/>
        </authorList>
    </citation>
    <scope>NUCLEOTIDE SEQUENCE [LARGE SCALE GENOMIC DNA]</scope>
    <source>
        <strain>Rowbotham-Bradford</strain>
    </source>
</reference>
<gene>
    <name type="ordered locus">MIMI_L94</name>
</gene>
<comment type="similarity">
    <text evidence="1">Belongs to the mimivirus L87/L94 family.</text>
</comment>
<organism>
    <name type="scientific">Acanthamoeba polyphaga mimivirus</name>
    <name type="common">APMV</name>
    <dbReference type="NCBI Taxonomy" id="212035"/>
    <lineage>
        <taxon>Viruses</taxon>
        <taxon>Varidnaviria</taxon>
        <taxon>Bamfordvirae</taxon>
        <taxon>Nucleocytoviricota</taxon>
        <taxon>Megaviricetes</taxon>
        <taxon>Imitervirales</taxon>
        <taxon>Mimiviridae</taxon>
        <taxon>Megamimivirinae</taxon>
        <taxon>Mimivirus</taxon>
        <taxon>Mimivirus bradfordmassiliense</taxon>
    </lineage>
</organism>
<accession>Q5UPH6</accession>
<keyword id="KW-1185">Reference proteome</keyword>
<evidence type="ECO:0000305" key="1"/>
<sequence length="133" mass="15059">MNINGPGVYHLNRDKIVYKAVYCRKNVLTGKKSEWFKSVATLRIKKDTXIVVPQTLSSRHTGLMRTDEAQVESVEDLNEVEIDTDEYECKSSGIKGPHIPIGFDENGIMYGLGIYSAHQQIALHKLQQRDSQL</sequence>
<proteinExistence type="inferred from homology"/>
<organismHost>
    <name type="scientific">Acanthamoeba polyphaga</name>
    <name type="common">Amoeba</name>
    <dbReference type="NCBI Taxonomy" id="5757"/>
</organismHost>
<protein>
    <recommendedName>
        <fullName>Uncharacterized protein L94</fullName>
    </recommendedName>
</protein>
<dbReference type="EMBL" id="AY653733">
    <property type="protein sequence ID" value="AAV50369.1"/>
    <property type="molecule type" value="Genomic_DNA"/>
</dbReference>
<dbReference type="Proteomes" id="UP000001134">
    <property type="component" value="Genome"/>
</dbReference>
<feature type="chain" id="PRO_0000071207" description="Uncharacterized protein L94">
    <location>
        <begin position="1"/>
        <end position="133"/>
    </location>
</feature>
<name>YL094_MIMIV</name>